<sequence>MSLKETVSNPYSKWLEATGPENDVIISSRVRLARNLMGYPFPHVLGHENADKVLYAVQSAVAQKSLQEAVGNLELSRMTELSSIERQILVEKHLISPDMLEQPEKRGVVLRDDEVISIMVNEEDHLRIQCLLPGLQLKECWDLANTVDDGLEQIIDYAFAKEQGYLTSCPTNIGTGLRASVMLHLPALVMTRQINAVLTTLSKLGLTVRGLYGEGTQATGNLFQVSNQVTLGLTEEEIIDNLITVALQLVTQERAARRALHKEQLHQIEDKVWRAYGLLKYARTMTSNETMTLLSDMRLGVDLGVITGIPPGIIMELIILSRPAFLSKVKGADLNPYQRDIFRATLIRERLNSLSNE</sequence>
<proteinExistence type="inferred from homology"/>
<protein>
    <recommendedName>
        <fullName evidence="1">Protein-arginine kinase</fullName>
        <ecNumber evidence="1">2.7.14.1</ecNumber>
    </recommendedName>
</protein>
<reference key="1">
    <citation type="submission" date="2007-03" db="EMBL/GenBank/DDBJ databases">
        <title>Complete sequence of Desulfotomaculum reducens MI-1.</title>
        <authorList>
            <consortium name="US DOE Joint Genome Institute"/>
            <person name="Copeland A."/>
            <person name="Lucas S."/>
            <person name="Lapidus A."/>
            <person name="Barry K."/>
            <person name="Detter J.C."/>
            <person name="Glavina del Rio T."/>
            <person name="Hammon N."/>
            <person name="Israni S."/>
            <person name="Dalin E."/>
            <person name="Tice H."/>
            <person name="Pitluck S."/>
            <person name="Sims D."/>
            <person name="Brettin T."/>
            <person name="Bruce D."/>
            <person name="Han C."/>
            <person name="Tapia R."/>
            <person name="Schmutz J."/>
            <person name="Larimer F."/>
            <person name="Land M."/>
            <person name="Hauser L."/>
            <person name="Kyrpides N."/>
            <person name="Kim E."/>
            <person name="Tebo B.M."/>
            <person name="Richardson P."/>
        </authorList>
    </citation>
    <scope>NUCLEOTIDE SEQUENCE [LARGE SCALE GENOMIC DNA]</scope>
    <source>
        <strain>ATCC BAA-1160 / DSM 100696 / MI-1</strain>
    </source>
</reference>
<gene>
    <name evidence="1" type="primary">mcsB</name>
    <name type="ordered locus">Dred_0179</name>
</gene>
<name>MCSB_DESRM</name>
<dbReference type="EC" id="2.7.14.1" evidence="1"/>
<dbReference type="EMBL" id="CP000612">
    <property type="protein sequence ID" value="ABO48728.1"/>
    <property type="molecule type" value="Genomic_DNA"/>
</dbReference>
<dbReference type="RefSeq" id="WP_011876569.1">
    <property type="nucleotide sequence ID" value="NC_009253.1"/>
</dbReference>
<dbReference type="SMR" id="A4J0X5"/>
<dbReference type="STRING" id="349161.Dred_0179"/>
<dbReference type="KEGG" id="drm:Dred_0179"/>
<dbReference type="eggNOG" id="COG3869">
    <property type="taxonomic scope" value="Bacteria"/>
</dbReference>
<dbReference type="HOGENOM" id="CLU_066591_1_0_9"/>
<dbReference type="OrthoDB" id="9791353at2"/>
<dbReference type="Proteomes" id="UP000001556">
    <property type="component" value="Chromosome"/>
</dbReference>
<dbReference type="GO" id="GO:0005615">
    <property type="term" value="C:extracellular space"/>
    <property type="evidence" value="ECO:0007669"/>
    <property type="project" value="TreeGrafter"/>
</dbReference>
<dbReference type="GO" id="GO:0005524">
    <property type="term" value="F:ATP binding"/>
    <property type="evidence" value="ECO:0007669"/>
    <property type="project" value="UniProtKB-KW"/>
</dbReference>
<dbReference type="GO" id="GO:0004111">
    <property type="term" value="F:creatine kinase activity"/>
    <property type="evidence" value="ECO:0007669"/>
    <property type="project" value="InterPro"/>
</dbReference>
<dbReference type="GO" id="GO:0004672">
    <property type="term" value="F:protein kinase activity"/>
    <property type="evidence" value="ECO:0007669"/>
    <property type="project" value="UniProtKB-UniRule"/>
</dbReference>
<dbReference type="GO" id="GO:0046314">
    <property type="term" value="P:phosphocreatine biosynthetic process"/>
    <property type="evidence" value="ECO:0007669"/>
    <property type="project" value="InterPro"/>
</dbReference>
<dbReference type="CDD" id="cd07930">
    <property type="entry name" value="bacterial_phosphagen_kinase"/>
    <property type="match status" value="1"/>
</dbReference>
<dbReference type="FunFam" id="3.30.590.10:FF:000007">
    <property type="entry name" value="Protein-arginine kinase"/>
    <property type="match status" value="1"/>
</dbReference>
<dbReference type="Gene3D" id="3.30.590.10">
    <property type="entry name" value="Glutamine synthetase/guanido kinase, catalytic domain"/>
    <property type="match status" value="1"/>
</dbReference>
<dbReference type="HAMAP" id="MF_00602">
    <property type="entry name" value="Prot_Arg_kinase"/>
    <property type="match status" value="1"/>
</dbReference>
<dbReference type="InterPro" id="IPR023660">
    <property type="entry name" value="Arg_Kinase"/>
</dbReference>
<dbReference type="InterPro" id="IPR000749">
    <property type="entry name" value="ATP-guanido_PTrfase"/>
</dbReference>
<dbReference type="InterPro" id="IPR022415">
    <property type="entry name" value="ATP-guanido_PTrfase_AS"/>
</dbReference>
<dbReference type="InterPro" id="IPR022414">
    <property type="entry name" value="ATP-guanido_PTrfase_cat"/>
</dbReference>
<dbReference type="InterPro" id="IPR014746">
    <property type="entry name" value="Gln_synth/guanido_kin_cat_dom"/>
</dbReference>
<dbReference type="NCBIfam" id="NF002194">
    <property type="entry name" value="PRK01059.1-4"/>
    <property type="match status" value="1"/>
</dbReference>
<dbReference type="PANTHER" id="PTHR11547:SF38">
    <property type="entry name" value="ARGININE KINASE 1-RELATED"/>
    <property type="match status" value="1"/>
</dbReference>
<dbReference type="PANTHER" id="PTHR11547">
    <property type="entry name" value="ARGININE OR CREATINE KINASE"/>
    <property type="match status" value="1"/>
</dbReference>
<dbReference type="Pfam" id="PF00217">
    <property type="entry name" value="ATP-gua_Ptrans"/>
    <property type="match status" value="1"/>
</dbReference>
<dbReference type="SUPFAM" id="SSF55931">
    <property type="entry name" value="Glutamine synthetase/guanido kinase"/>
    <property type="match status" value="1"/>
</dbReference>
<dbReference type="PROSITE" id="PS00112">
    <property type="entry name" value="PHOSPHAGEN_KINASE"/>
    <property type="match status" value="1"/>
</dbReference>
<dbReference type="PROSITE" id="PS51510">
    <property type="entry name" value="PHOSPHAGEN_KINASE_C"/>
    <property type="match status" value="1"/>
</dbReference>
<keyword id="KW-0021">Allosteric enzyme</keyword>
<keyword id="KW-0067">ATP-binding</keyword>
<keyword id="KW-0418">Kinase</keyword>
<keyword id="KW-0547">Nucleotide-binding</keyword>
<keyword id="KW-1185">Reference proteome</keyword>
<keyword id="KW-0808">Transferase</keyword>
<evidence type="ECO:0000255" key="1">
    <source>
        <dbReference type="HAMAP-Rule" id="MF_00602"/>
    </source>
</evidence>
<comment type="function">
    <text evidence="1">Catalyzes the specific phosphorylation of arginine residues in proteins.</text>
</comment>
<comment type="catalytic activity">
    <reaction evidence="1">
        <text>L-arginyl-[protein] + ATP = N(omega)-phospho-L-arginyl-[protein] + ADP + H(+)</text>
        <dbReference type="Rhea" id="RHEA:43384"/>
        <dbReference type="Rhea" id="RHEA-COMP:10532"/>
        <dbReference type="Rhea" id="RHEA-COMP:10533"/>
        <dbReference type="ChEBI" id="CHEBI:15378"/>
        <dbReference type="ChEBI" id="CHEBI:29965"/>
        <dbReference type="ChEBI" id="CHEBI:30616"/>
        <dbReference type="ChEBI" id="CHEBI:83226"/>
        <dbReference type="ChEBI" id="CHEBI:456216"/>
        <dbReference type="EC" id="2.7.14.1"/>
    </reaction>
</comment>
<comment type="activity regulation">
    <text evidence="1">Appears to be allosterically activated by the binding of pArg-containing polypeptides to the pArg-binding pocket localized in the C-terminal domain of McsB.</text>
</comment>
<comment type="similarity">
    <text evidence="1">Belongs to the ATP:guanido phosphotransferase family.</text>
</comment>
<accession>A4J0X5</accession>
<feature type="chain" id="PRO_1000130112" description="Protein-arginine kinase">
    <location>
        <begin position="1"/>
        <end position="357"/>
    </location>
</feature>
<feature type="domain" description="Phosphagen kinase C-terminal" evidence="1">
    <location>
        <begin position="24"/>
        <end position="256"/>
    </location>
</feature>
<feature type="short sequence motif" description="RDXXRA motif of the pArg binding pocket involved in allosteric regulation" evidence="1">
    <location>
        <begin position="339"/>
        <end position="344"/>
    </location>
</feature>
<feature type="binding site" evidence="1">
    <location>
        <begin position="27"/>
        <end position="31"/>
    </location>
    <ligand>
        <name>ATP</name>
        <dbReference type="ChEBI" id="CHEBI:30616"/>
    </ligand>
</feature>
<feature type="binding site" evidence="1">
    <location>
        <position position="93"/>
    </location>
    <ligand>
        <name>ATP</name>
        <dbReference type="ChEBI" id="CHEBI:30616"/>
    </ligand>
</feature>
<feature type="binding site" evidence="1">
    <location>
        <position position="127"/>
    </location>
    <ligand>
        <name>ATP</name>
        <dbReference type="ChEBI" id="CHEBI:30616"/>
    </ligand>
</feature>
<feature type="binding site" evidence="1">
    <location>
        <begin position="178"/>
        <end position="182"/>
    </location>
    <ligand>
        <name>ATP</name>
        <dbReference type="ChEBI" id="CHEBI:30616"/>
    </ligand>
</feature>
<feature type="binding site" evidence="1">
    <location>
        <begin position="209"/>
        <end position="214"/>
    </location>
    <ligand>
        <name>ATP</name>
        <dbReference type="ChEBI" id="CHEBI:30616"/>
    </ligand>
</feature>
<organism>
    <name type="scientific">Desulforamulus reducens (strain ATCC BAA-1160 / DSM 100696 / MI-1)</name>
    <name type="common">Desulfotomaculum reducens</name>
    <dbReference type="NCBI Taxonomy" id="349161"/>
    <lineage>
        <taxon>Bacteria</taxon>
        <taxon>Bacillati</taxon>
        <taxon>Bacillota</taxon>
        <taxon>Clostridia</taxon>
        <taxon>Eubacteriales</taxon>
        <taxon>Peptococcaceae</taxon>
        <taxon>Desulforamulus</taxon>
    </lineage>
</organism>